<geneLocation type="plasmid">
    <name>pNRC200</name>
</geneLocation>
<reference key="1">
    <citation type="journal article" date="2000" name="Proc. Natl. Acad. Sci. U.S.A.">
        <title>Genome sequence of Halobacterium species NRC-1.</title>
        <authorList>
            <person name="Ng W.V."/>
            <person name="Kennedy S.P."/>
            <person name="Mahairas G.G."/>
            <person name="Berquist B."/>
            <person name="Pan M."/>
            <person name="Shukla H.D."/>
            <person name="Lasky S.R."/>
            <person name="Baliga N.S."/>
            <person name="Thorsson V."/>
            <person name="Sbrogna J."/>
            <person name="Swartzell S."/>
            <person name="Weir D."/>
            <person name="Hall J."/>
            <person name="Dahl T.A."/>
            <person name="Welti R."/>
            <person name="Goo Y.A."/>
            <person name="Leithauser B."/>
            <person name="Keller K."/>
            <person name="Cruz R."/>
            <person name="Danson M.J."/>
            <person name="Hough D.W."/>
            <person name="Maddocks D.G."/>
            <person name="Jablonski P.E."/>
            <person name="Krebs M.P."/>
            <person name="Angevine C.M."/>
            <person name="Dale H."/>
            <person name="Isenbarger T.A."/>
            <person name="Peck R.F."/>
            <person name="Pohlschroder M."/>
            <person name="Spudich J.L."/>
            <person name="Jung K.-H."/>
            <person name="Alam M."/>
            <person name="Freitas T."/>
            <person name="Hou S."/>
            <person name="Daniels C.J."/>
            <person name="Dennis P.P."/>
            <person name="Omer A.D."/>
            <person name="Ebhardt H."/>
            <person name="Lowe T.M."/>
            <person name="Liang P."/>
            <person name="Riley M."/>
            <person name="Hood L."/>
            <person name="DasSarma S."/>
        </authorList>
    </citation>
    <scope>NUCLEOTIDE SEQUENCE [LARGE SCALE GENOMIC DNA]</scope>
    <source>
        <strain>ATCC 700922 / JCM 11081 / NRC-1</strain>
        <plasmid>pNRC200</plasmid>
    </source>
</reference>
<reference key="2">
    <citation type="journal article" date="2007" name="BMC Genet.">
        <title>Essential and non-essential DNA replication genes in the model halophilic Archaeon, Halobacterium sp. NRC-1.</title>
        <authorList>
            <person name="Berquist B.R."/>
            <person name="DasSarma P."/>
            <person name="DasSarma S."/>
        </authorList>
    </citation>
    <scope>DISRUPTION PHENOTYPE</scope>
    <source>
        <strain>ATCC 700922 / JCM 11081 / NRC-1</strain>
    </source>
</reference>
<feature type="chain" id="PRO_0000428863" description="ORC1-type DNA replication protein 1">
    <location>
        <begin position="1"/>
        <end position="308"/>
    </location>
</feature>
<feature type="binding site" evidence="1">
    <location>
        <begin position="51"/>
        <end position="55"/>
    </location>
    <ligand>
        <name>ATP</name>
        <dbReference type="ChEBI" id="CHEBI:30616"/>
    </ligand>
</feature>
<feature type="binding site" evidence="1">
    <location>
        <position position="183"/>
    </location>
    <ligand>
        <name>ATP</name>
        <dbReference type="ChEBI" id="CHEBI:30616"/>
    </ligand>
</feature>
<feature type="binding site" evidence="1">
    <location>
        <position position="195"/>
    </location>
    <ligand>
        <name>ATP</name>
        <dbReference type="ChEBI" id="CHEBI:30616"/>
    </ligand>
</feature>
<sequence length="308" mass="35315">MITDARVLQPEFIPREVQHRDAEVNYLSSVLNPLTKGERADSALLYGPSGVGKTCIAQFLVEQLRGEVVALNYQYVNCWEDHSRFQTLYRLLDGIGKTVDIHRQSTPTDVHLNRLRTADDTSYVVILDEVDQLEDKSLLYDLYRIPHITMILIANDEEDLFASLDQRLNSRLTDCERIHFDPYHENELIPILHDRVHWGLEEDVISDSHLQLIAANAGGDARVVIGILRHSARTARETGSDQITADLIEEVTPEAKSEIKQRTVDRFTPHQELLYNIITEHGEISPQDLYDAYCTRTDDPKTKRMVRN</sequence>
<evidence type="ECO:0000250" key="1"/>
<evidence type="ECO:0000269" key="2">
    <source>
    </source>
</evidence>
<evidence type="ECO:0000305" key="3"/>
<proteinExistence type="inferred from homology"/>
<dbReference type="EMBL" id="AE004438">
    <property type="protein sequence ID" value="AAG20823.1"/>
    <property type="molecule type" value="Genomic_DNA"/>
</dbReference>
<dbReference type="RefSeq" id="WP_010904037.1">
    <property type="nucleotide sequence ID" value="NZ_BK010831.1"/>
</dbReference>
<dbReference type="SMR" id="Q9HHZ9"/>
<dbReference type="GeneID" id="89350649"/>
<dbReference type="KEGG" id="hal:VNG_6150G"/>
<dbReference type="PATRIC" id="fig|64091.14.peg.2182"/>
<dbReference type="HOGENOM" id="CLU_025112_0_0_2"/>
<dbReference type="InParanoid" id="Q9HHZ9"/>
<dbReference type="OrthoDB" id="270161at2157"/>
<dbReference type="PhylomeDB" id="Q9HHZ9"/>
<dbReference type="Proteomes" id="UP000000554">
    <property type="component" value="Plasmid pNRC200"/>
</dbReference>
<dbReference type="GO" id="GO:0005524">
    <property type="term" value="F:ATP binding"/>
    <property type="evidence" value="ECO:0007669"/>
    <property type="project" value="UniProtKB-KW"/>
</dbReference>
<dbReference type="GO" id="GO:0016887">
    <property type="term" value="F:ATP hydrolysis activity"/>
    <property type="evidence" value="ECO:0007669"/>
    <property type="project" value="InterPro"/>
</dbReference>
<dbReference type="GO" id="GO:0006260">
    <property type="term" value="P:DNA replication"/>
    <property type="evidence" value="ECO:0007669"/>
    <property type="project" value="UniProtKB-KW"/>
</dbReference>
<dbReference type="CDD" id="cd18139">
    <property type="entry name" value="HLD_clamp_RarA"/>
    <property type="match status" value="1"/>
</dbReference>
<dbReference type="FunFam" id="3.40.50.300:FF:001565">
    <property type="entry name" value="Orc1-type DNA replication protein"/>
    <property type="match status" value="1"/>
</dbReference>
<dbReference type="Gene3D" id="1.10.8.60">
    <property type="match status" value="1"/>
</dbReference>
<dbReference type="Gene3D" id="3.40.50.300">
    <property type="entry name" value="P-loop containing nucleotide triphosphate hydrolases"/>
    <property type="match status" value="1"/>
</dbReference>
<dbReference type="InterPro" id="IPR003593">
    <property type="entry name" value="AAA+_ATPase"/>
</dbReference>
<dbReference type="InterPro" id="IPR049945">
    <property type="entry name" value="AAA_22"/>
</dbReference>
<dbReference type="InterPro" id="IPR055237">
    <property type="entry name" value="Cdc6_lid"/>
</dbReference>
<dbReference type="InterPro" id="IPR050311">
    <property type="entry name" value="ORC1/CDC6"/>
</dbReference>
<dbReference type="InterPro" id="IPR014277">
    <property type="entry name" value="Orc1/Cdc6_arc"/>
</dbReference>
<dbReference type="InterPro" id="IPR027417">
    <property type="entry name" value="P-loop_NTPase"/>
</dbReference>
<dbReference type="NCBIfam" id="TIGR02928">
    <property type="entry name" value="orc1/cdc6 family replication initiation protein"/>
    <property type="match status" value="1"/>
</dbReference>
<dbReference type="PANTHER" id="PTHR10763">
    <property type="entry name" value="CELL DIVISION CONTROL PROTEIN 6-RELATED"/>
    <property type="match status" value="1"/>
</dbReference>
<dbReference type="PANTHER" id="PTHR10763:SF22">
    <property type="entry name" value="ORC1-TYPE DNA REPLICATION PROTEIN"/>
    <property type="match status" value="1"/>
</dbReference>
<dbReference type="Pfam" id="PF13401">
    <property type="entry name" value="AAA_22"/>
    <property type="match status" value="1"/>
</dbReference>
<dbReference type="Pfam" id="PF22703">
    <property type="entry name" value="Cdc6_lid"/>
    <property type="match status" value="1"/>
</dbReference>
<dbReference type="SMART" id="SM00382">
    <property type="entry name" value="AAA"/>
    <property type="match status" value="1"/>
</dbReference>
<dbReference type="SUPFAM" id="SSF52540">
    <property type="entry name" value="P-loop containing nucleoside triphosphate hydrolases"/>
    <property type="match status" value="1"/>
</dbReference>
<accession>Q9HHZ9</accession>
<gene>
    <name type="primary">orc1</name>
    <name type="ordered locus">VNG_6150G</name>
</gene>
<comment type="function">
    <text evidence="1">Involved in regulation of DNA replication.</text>
</comment>
<comment type="disruption phenotype">
    <text evidence="2">Not essential for normal growth.</text>
</comment>
<comment type="similarity">
    <text evidence="3">Belongs to the CDC6/cdc18 family.</text>
</comment>
<name>CDC61_HALSA</name>
<keyword id="KW-0067">ATP-binding</keyword>
<keyword id="KW-0235">DNA replication</keyword>
<keyword id="KW-0547">Nucleotide-binding</keyword>
<keyword id="KW-0614">Plasmid</keyword>
<keyword id="KW-1185">Reference proteome</keyword>
<protein>
    <recommendedName>
        <fullName>ORC1-type DNA replication protein 1</fullName>
    </recommendedName>
</protein>
<organism>
    <name type="scientific">Halobacterium salinarum (strain ATCC 700922 / JCM 11081 / NRC-1)</name>
    <name type="common">Halobacterium halobium</name>
    <dbReference type="NCBI Taxonomy" id="64091"/>
    <lineage>
        <taxon>Archaea</taxon>
        <taxon>Methanobacteriati</taxon>
        <taxon>Methanobacteriota</taxon>
        <taxon>Stenosarchaea group</taxon>
        <taxon>Halobacteria</taxon>
        <taxon>Halobacteriales</taxon>
        <taxon>Halobacteriaceae</taxon>
        <taxon>Halobacterium</taxon>
        <taxon>Halobacterium salinarum NRC-34001</taxon>
    </lineage>
</organism>